<protein>
    <recommendedName>
        <fullName evidence="1">FMN-dependent NADH:quinone oxidoreductase</fullName>
        <ecNumber evidence="1">1.6.5.-</ecNumber>
    </recommendedName>
    <alternativeName>
        <fullName evidence="1">Azo-dye reductase</fullName>
    </alternativeName>
    <alternativeName>
        <fullName evidence="1">FMN-dependent NADH-azo compound oxidoreductase</fullName>
    </alternativeName>
    <alternativeName>
        <fullName evidence="1">FMN-dependent NADH-azoreductase</fullName>
        <ecNumber evidence="1">1.7.1.17</ecNumber>
    </alternativeName>
</protein>
<feature type="chain" id="PRO_1000164755" description="FMN-dependent NADH:quinone oxidoreductase">
    <location>
        <begin position="1"/>
        <end position="213"/>
    </location>
</feature>
<feature type="binding site" evidence="1">
    <location>
        <begin position="17"/>
        <end position="19"/>
    </location>
    <ligand>
        <name>FMN</name>
        <dbReference type="ChEBI" id="CHEBI:58210"/>
    </ligand>
</feature>
<reference key="1">
    <citation type="submission" date="2009-01" db="EMBL/GenBank/DDBJ databases">
        <title>Complete sequence of Clostridium cellulolyticum H10.</title>
        <authorList>
            <consortium name="US DOE Joint Genome Institute"/>
            <person name="Lucas S."/>
            <person name="Copeland A."/>
            <person name="Lapidus A."/>
            <person name="Glavina del Rio T."/>
            <person name="Dalin E."/>
            <person name="Tice H."/>
            <person name="Bruce D."/>
            <person name="Goodwin L."/>
            <person name="Pitluck S."/>
            <person name="Chertkov O."/>
            <person name="Saunders E."/>
            <person name="Brettin T."/>
            <person name="Detter J.C."/>
            <person name="Han C."/>
            <person name="Larimer F."/>
            <person name="Land M."/>
            <person name="Hauser L."/>
            <person name="Kyrpides N."/>
            <person name="Ivanova N."/>
            <person name="Zhou J."/>
            <person name="Richardson P."/>
        </authorList>
    </citation>
    <scope>NUCLEOTIDE SEQUENCE [LARGE SCALE GENOMIC DNA]</scope>
    <source>
        <strain>ATCC 35319 / DSM 5812 / JCM 6584 / H10</strain>
    </source>
</reference>
<proteinExistence type="inferred from homology"/>
<name>AZOR_RUMCH</name>
<organism>
    <name type="scientific">Ruminiclostridium cellulolyticum (strain ATCC 35319 / DSM 5812 / JCM 6584 / H10)</name>
    <name type="common">Clostridium cellulolyticum</name>
    <dbReference type="NCBI Taxonomy" id="394503"/>
    <lineage>
        <taxon>Bacteria</taxon>
        <taxon>Bacillati</taxon>
        <taxon>Bacillota</taxon>
        <taxon>Clostridia</taxon>
        <taxon>Eubacteriales</taxon>
        <taxon>Oscillospiraceae</taxon>
        <taxon>Ruminiclostridium</taxon>
    </lineage>
</organism>
<accession>B8I799</accession>
<evidence type="ECO:0000255" key="1">
    <source>
        <dbReference type="HAMAP-Rule" id="MF_01216"/>
    </source>
</evidence>
<keyword id="KW-0285">Flavoprotein</keyword>
<keyword id="KW-0288">FMN</keyword>
<keyword id="KW-0520">NAD</keyword>
<keyword id="KW-0560">Oxidoreductase</keyword>
<keyword id="KW-1185">Reference proteome</keyword>
<comment type="function">
    <text evidence="1">Quinone reductase that provides resistance to thiol-specific stress caused by electrophilic quinones.</text>
</comment>
<comment type="function">
    <text evidence="1">Also exhibits azoreductase activity. Catalyzes the reductive cleavage of the azo bond in aromatic azo compounds to the corresponding amines.</text>
</comment>
<comment type="catalytic activity">
    <reaction evidence="1">
        <text>2 a quinone + NADH + H(+) = 2 a 1,4-benzosemiquinone + NAD(+)</text>
        <dbReference type="Rhea" id="RHEA:65952"/>
        <dbReference type="ChEBI" id="CHEBI:15378"/>
        <dbReference type="ChEBI" id="CHEBI:57540"/>
        <dbReference type="ChEBI" id="CHEBI:57945"/>
        <dbReference type="ChEBI" id="CHEBI:132124"/>
        <dbReference type="ChEBI" id="CHEBI:134225"/>
    </reaction>
</comment>
<comment type="catalytic activity">
    <reaction evidence="1">
        <text>N,N-dimethyl-1,4-phenylenediamine + anthranilate + 2 NAD(+) = 2-(4-dimethylaminophenyl)diazenylbenzoate + 2 NADH + 2 H(+)</text>
        <dbReference type="Rhea" id="RHEA:55872"/>
        <dbReference type="ChEBI" id="CHEBI:15378"/>
        <dbReference type="ChEBI" id="CHEBI:15783"/>
        <dbReference type="ChEBI" id="CHEBI:16567"/>
        <dbReference type="ChEBI" id="CHEBI:57540"/>
        <dbReference type="ChEBI" id="CHEBI:57945"/>
        <dbReference type="ChEBI" id="CHEBI:71579"/>
        <dbReference type="EC" id="1.7.1.17"/>
    </reaction>
</comment>
<comment type="cofactor">
    <cofactor evidence="1">
        <name>FMN</name>
        <dbReference type="ChEBI" id="CHEBI:58210"/>
    </cofactor>
    <text evidence="1">Binds 1 FMN per subunit.</text>
</comment>
<comment type="subunit">
    <text evidence="1">Homodimer.</text>
</comment>
<comment type="similarity">
    <text evidence="1">Belongs to the azoreductase type 1 family.</text>
</comment>
<dbReference type="EC" id="1.6.5.-" evidence="1"/>
<dbReference type="EC" id="1.7.1.17" evidence="1"/>
<dbReference type="EMBL" id="CP001348">
    <property type="protein sequence ID" value="ACL75023.1"/>
    <property type="molecule type" value="Genomic_DNA"/>
</dbReference>
<dbReference type="RefSeq" id="WP_015924192.1">
    <property type="nucleotide sequence ID" value="NC_011898.1"/>
</dbReference>
<dbReference type="SMR" id="B8I799"/>
<dbReference type="STRING" id="394503.Ccel_0642"/>
<dbReference type="KEGG" id="cce:Ccel_0642"/>
<dbReference type="eggNOG" id="COG1182">
    <property type="taxonomic scope" value="Bacteria"/>
</dbReference>
<dbReference type="HOGENOM" id="CLU_088964_3_1_9"/>
<dbReference type="OrthoDB" id="9805013at2"/>
<dbReference type="Proteomes" id="UP000001349">
    <property type="component" value="Chromosome"/>
</dbReference>
<dbReference type="GO" id="GO:0009055">
    <property type="term" value="F:electron transfer activity"/>
    <property type="evidence" value="ECO:0007669"/>
    <property type="project" value="UniProtKB-UniRule"/>
</dbReference>
<dbReference type="GO" id="GO:0010181">
    <property type="term" value="F:FMN binding"/>
    <property type="evidence" value="ECO:0007669"/>
    <property type="project" value="UniProtKB-UniRule"/>
</dbReference>
<dbReference type="GO" id="GO:0016652">
    <property type="term" value="F:oxidoreductase activity, acting on NAD(P)H as acceptor"/>
    <property type="evidence" value="ECO:0007669"/>
    <property type="project" value="UniProtKB-UniRule"/>
</dbReference>
<dbReference type="GO" id="GO:0016655">
    <property type="term" value="F:oxidoreductase activity, acting on NAD(P)H, quinone or similar compound as acceptor"/>
    <property type="evidence" value="ECO:0007669"/>
    <property type="project" value="InterPro"/>
</dbReference>
<dbReference type="Gene3D" id="3.40.50.360">
    <property type="match status" value="1"/>
</dbReference>
<dbReference type="HAMAP" id="MF_01216">
    <property type="entry name" value="Azoreductase_type1"/>
    <property type="match status" value="1"/>
</dbReference>
<dbReference type="InterPro" id="IPR003680">
    <property type="entry name" value="Flavodoxin_fold"/>
</dbReference>
<dbReference type="InterPro" id="IPR029039">
    <property type="entry name" value="Flavoprotein-like_sf"/>
</dbReference>
<dbReference type="InterPro" id="IPR050104">
    <property type="entry name" value="FMN-dep_NADH:Q_OxRdtase_AzoR1"/>
</dbReference>
<dbReference type="InterPro" id="IPR023048">
    <property type="entry name" value="NADH:quinone_OxRdtase_FMN_depd"/>
</dbReference>
<dbReference type="PANTHER" id="PTHR43741">
    <property type="entry name" value="FMN-DEPENDENT NADH-AZOREDUCTASE 1"/>
    <property type="match status" value="1"/>
</dbReference>
<dbReference type="PANTHER" id="PTHR43741:SF4">
    <property type="entry name" value="FMN-DEPENDENT NADH:QUINONE OXIDOREDUCTASE"/>
    <property type="match status" value="1"/>
</dbReference>
<dbReference type="Pfam" id="PF02525">
    <property type="entry name" value="Flavodoxin_2"/>
    <property type="match status" value="1"/>
</dbReference>
<dbReference type="SUPFAM" id="SSF52218">
    <property type="entry name" value="Flavoproteins"/>
    <property type="match status" value="1"/>
</dbReference>
<sequence length="213" mass="24272">MKKLLYISVNTKPEEMSSSKTVARKLINSILEKHPSMALEEVDLYREHIPQLKYSYFESRSAIVNSEALAKLPQDEQNEVTQIIKLCDQFRAADIYIIASPMWSLSFPAPLKEYIDCVVQSGKTIAFDENKPYGLLNDKERTFIYVQSSGANIPWIIRPALNKGLNYVHDIIRFLGISKFEELLVDGTGTTELERQEAIEKAASRIETLVDQI</sequence>
<gene>
    <name evidence="1" type="primary">azoR</name>
    <name type="ordered locus">Ccel_0642</name>
</gene>